<sequence length="314" mass="36926">MPIRIDKKLPAVEILRTENIFVMDDQRAAHQDIRPLKILILNLMPQKMVTETQLLRHLANTPLQLDIDFLYMESHRSKTTRSEHMETFYKTFPEVKDEYFDGMIITGAPVEHLPFEEVDYWEEFRQMLEWSKTHVYSTLHICWGAQAGLYLRYGVEKYQMDSKLSGIYPQDTLKEGHLLFRGFDDSYVSPHSRHTEISKEEVLNKTNLEILSEGPQVGVSILASRDLREIYSFGHLEYDRDTLAKEYFRDRDAGFDPHIPENYFKDDDVNQVPCLCWSSSAALFFSNWVNHAVYQETPFDWRKIEDDASAYGYL</sequence>
<organism>
    <name type="scientific">Streptococcus pneumoniae (strain 70585)</name>
    <dbReference type="NCBI Taxonomy" id="488221"/>
    <lineage>
        <taxon>Bacteria</taxon>
        <taxon>Bacillati</taxon>
        <taxon>Bacillota</taxon>
        <taxon>Bacilli</taxon>
        <taxon>Lactobacillales</taxon>
        <taxon>Streptococcaceae</taxon>
        <taxon>Streptococcus</taxon>
    </lineage>
</organism>
<accession>C1C8G7</accession>
<name>METAA_STRP7</name>
<evidence type="ECO:0000255" key="1">
    <source>
        <dbReference type="HAMAP-Rule" id="MF_00295"/>
    </source>
</evidence>
<protein>
    <recommendedName>
        <fullName evidence="1">Homoserine O-acetyltransferase</fullName>
        <shortName evidence="1">HAT</shortName>
        <ecNumber evidence="1">2.3.1.31</ecNumber>
    </recommendedName>
    <alternativeName>
        <fullName evidence="1">Homoserine transacetylase</fullName>
        <shortName evidence="1">HTA</shortName>
    </alternativeName>
</protein>
<gene>
    <name evidence="1" type="primary">metAA</name>
    <name type="ordered locus">SP70585_1617</name>
</gene>
<reference key="1">
    <citation type="journal article" date="2010" name="Genome Biol.">
        <title>Structure and dynamics of the pan-genome of Streptococcus pneumoniae and closely related species.</title>
        <authorList>
            <person name="Donati C."/>
            <person name="Hiller N.L."/>
            <person name="Tettelin H."/>
            <person name="Muzzi A."/>
            <person name="Croucher N.J."/>
            <person name="Angiuoli S.V."/>
            <person name="Oggioni M."/>
            <person name="Dunning Hotopp J.C."/>
            <person name="Hu F.Z."/>
            <person name="Riley D.R."/>
            <person name="Covacci A."/>
            <person name="Mitchell T.J."/>
            <person name="Bentley S.D."/>
            <person name="Kilian M."/>
            <person name="Ehrlich G.D."/>
            <person name="Rappuoli R."/>
            <person name="Moxon E.R."/>
            <person name="Masignani V."/>
        </authorList>
    </citation>
    <scope>NUCLEOTIDE SEQUENCE [LARGE SCALE GENOMIC DNA]</scope>
    <source>
        <strain>70585</strain>
    </source>
</reference>
<proteinExistence type="inferred from homology"/>
<comment type="function">
    <text evidence="1">Transfers an acetyl group from acetyl-CoA to L-homoserine, forming acetyl-L-homoserine.</text>
</comment>
<comment type="catalytic activity">
    <reaction evidence="1">
        <text>L-homoserine + acetyl-CoA = O-acetyl-L-homoserine + CoA</text>
        <dbReference type="Rhea" id="RHEA:13701"/>
        <dbReference type="ChEBI" id="CHEBI:57287"/>
        <dbReference type="ChEBI" id="CHEBI:57288"/>
        <dbReference type="ChEBI" id="CHEBI:57476"/>
        <dbReference type="ChEBI" id="CHEBI:57716"/>
        <dbReference type="EC" id="2.3.1.31"/>
    </reaction>
</comment>
<comment type="pathway">
    <text evidence="1">Amino-acid biosynthesis; L-methionine biosynthesis via de novo pathway; O-acetyl-L-homoserine from L-homoserine: step 1/1.</text>
</comment>
<comment type="subcellular location">
    <subcellularLocation>
        <location evidence="1">Cytoplasm</location>
    </subcellularLocation>
</comment>
<comment type="similarity">
    <text evidence="1">Belongs to the MetA family.</text>
</comment>
<feature type="chain" id="PRO_1000132712" description="Homoserine O-acetyltransferase">
    <location>
        <begin position="1"/>
        <end position="314"/>
    </location>
</feature>
<feature type="active site" description="Acyl-thioester intermediate" evidence="1">
    <location>
        <position position="142"/>
    </location>
</feature>
<feature type="active site" description="Proton acceptor" evidence="1">
    <location>
        <position position="235"/>
    </location>
</feature>
<feature type="active site" evidence="1">
    <location>
        <position position="237"/>
    </location>
</feature>
<feature type="binding site" evidence="1">
    <location>
        <position position="163"/>
    </location>
    <ligand>
        <name>substrate</name>
    </ligand>
</feature>
<feature type="binding site" evidence="1">
    <location>
        <position position="192"/>
    </location>
    <ligand>
        <name>substrate</name>
    </ligand>
</feature>
<feature type="binding site" evidence="1">
    <location>
        <position position="249"/>
    </location>
    <ligand>
        <name>substrate</name>
    </ligand>
</feature>
<feature type="site" description="Important for acyl-CoA specificity" evidence="1">
    <location>
        <position position="111"/>
    </location>
</feature>
<feature type="site" description="Important for substrate specificity" evidence="1">
    <location>
        <position position="192"/>
    </location>
</feature>
<dbReference type="EC" id="2.3.1.31" evidence="1"/>
<dbReference type="EMBL" id="CP000918">
    <property type="protein sequence ID" value="ACO16067.1"/>
    <property type="molecule type" value="Genomic_DNA"/>
</dbReference>
<dbReference type="SMR" id="C1C8G7"/>
<dbReference type="KEGG" id="snm:SP70585_1617"/>
<dbReference type="HOGENOM" id="CLU_057851_0_1_9"/>
<dbReference type="UniPathway" id="UPA00051">
    <property type="reaction ID" value="UER00074"/>
</dbReference>
<dbReference type="Proteomes" id="UP000002211">
    <property type="component" value="Chromosome"/>
</dbReference>
<dbReference type="GO" id="GO:0005737">
    <property type="term" value="C:cytoplasm"/>
    <property type="evidence" value="ECO:0007669"/>
    <property type="project" value="UniProtKB-SubCell"/>
</dbReference>
<dbReference type="GO" id="GO:0004414">
    <property type="term" value="F:homoserine O-acetyltransferase activity"/>
    <property type="evidence" value="ECO:0007669"/>
    <property type="project" value="UniProtKB-EC"/>
</dbReference>
<dbReference type="GO" id="GO:0008899">
    <property type="term" value="F:homoserine O-succinyltransferase activity"/>
    <property type="evidence" value="ECO:0007669"/>
    <property type="project" value="UniProtKB-UniRule"/>
</dbReference>
<dbReference type="GO" id="GO:0019281">
    <property type="term" value="P:L-methionine biosynthetic process from homoserine via O-succinyl-L-homoserine and cystathionine"/>
    <property type="evidence" value="ECO:0007669"/>
    <property type="project" value="InterPro"/>
</dbReference>
<dbReference type="CDD" id="cd03131">
    <property type="entry name" value="GATase1_HTS"/>
    <property type="match status" value="1"/>
</dbReference>
<dbReference type="FunFam" id="3.40.50.880:FF:000004">
    <property type="entry name" value="Homoserine O-succinyltransferase"/>
    <property type="match status" value="1"/>
</dbReference>
<dbReference type="Gene3D" id="3.40.50.880">
    <property type="match status" value="1"/>
</dbReference>
<dbReference type="HAMAP" id="MF_00295">
    <property type="entry name" value="MetA_acyltransf"/>
    <property type="match status" value="1"/>
</dbReference>
<dbReference type="InterPro" id="IPR029062">
    <property type="entry name" value="Class_I_gatase-like"/>
</dbReference>
<dbReference type="InterPro" id="IPR005697">
    <property type="entry name" value="HST_MetA"/>
</dbReference>
<dbReference type="InterPro" id="IPR033752">
    <property type="entry name" value="MetA_family"/>
</dbReference>
<dbReference type="NCBIfam" id="TIGR01001">
    <property type="entry name" value="metA"/>
    <property type="match status" value="1"/>
</dbReference>
<dbReference type="PANTHER" id="PTHR20919">
    <property type="entry name" value="HOMOSERINE O-SUCCINYLTRANSFERASE"/>
    <property type="match status" value="1"/>
</dbReference>
<dbReference type="PANTHER" id="PTHR20919:SF0">
    <property type="entry name" value="HOMOSERINE O-SUCCINYLTRANSFERASE"/>
    <property type="match status" value="1"/>
</dbReference>
<dbReference type="Pfam" id="PF04204">
    <property type="entry name" value="HTS"/>
    <property type="match status" value="1"/>
</dbReference>
<dbReference type="PIRSF" id="PIRSF000450">
    <property type="entry name" value="H_ser_succinyltr"/>
    <property type="match status" value="1"/>
</dbReference>
<dbReference type="SUPFAM" id="SSF52317">
    <property type="entry name" value="Class I glutamine amidotransferase-like"/>
    <property type="match status" value="1"/>
</dbReference>
<keyword id="KW-0012">Acyltransferase</keyword>
<keyword id="KW-0028">Amino-acid biosynthesis</keyword>
<keyword id="KW-0963">Cytoplasm</keyword>
<keyword id="KW-0486">Methionine biosynthesis</keyword>
<keyword id="KW-0808">Transferase</keyword>